<feature type="chain" id="PRO_1000009975" description="DNA mismatch repair protein MutL">
    <location>
        <begin position="1"/>
        <end position="624"/>
    </location>
</feature>
<feature type="region of interest" description="Disordered" evidence="2">
    <location>
        <begin position="355"/>
        <end position="377"/>
    </location>
</feature>
<feature type="compositionally biased region" description="Basic and acidic residues" evidence="2">
    <location>
        <begin position="358"/>
        <end position="368"/>
    </location>
</feature>
<sequence length="624" mass="70144">MAKVIQLSDELSNKIAAGEVVERPASVVKELVENAIDANSTVIEIDIEEAGLSSIRVLDNGEGMETDDCKRAFRRHATSKIKDENDLFRVRTLGFRGEALPSIASVSHLEIKTSIGEGAGTHLILQGGNIISEQKSSSRKGTEIIVTNLFFNTPARLKYMKTVHTELGNITDVVNRIALAHPEVSIRLRHQGKNLLQTNGNGDVRHVLAAIYGTAVAKKMIPLHISSLDFEVKGYIALPEITRASRNYMSSVINGRYIKNFPLVKAVHEGYHTLLPIGRHPITFIEITMDPILVDVNVHPSKLEVRLSKETELHELIRDGIKEVFQKQRLIPSAQLPKKSAPAPAKNEQQFMTFEESAPERKLPEKTPEPSYSPMKLSSVVKEPEPVIIEEEILPNEADHGVPPELGMPETAAPVSDTPEPEAVSEEIREERVPMMYPIGQMHGTYILAQNENGLYIIDQHAAQERIKYEYFREKVGQVEPEVQDMIVPLTFHYAANEALIIDQHQHELESVGVFLEAFGTNSYIVRCHPAWFPKGEEAELIEEIIQQVLDAKQIDIKKLREEAAIMMSCKGSIKANRHLRNDEIKALLDDLRRTTDPFTCPHGRPIIIHHSTYEMEKMFKRVM</sequence>
<name>MUTL_BACVZ</name>
<reference key="1">
    <citation type="journal article" date="2007" name="Nat. Biotechnol.">
        <title>Comparative analysis of the complete genome sequence of the plant growth-promoting bacterium Bacillus amyloliquefaciens FZB42.</title>
        <authorList>
            <person name="Chen X.H."/>
            <person name="Koumoutsi A."/>
            <person name="Scholz R."/>
            <person name="Eisenreich A."/>
            <person name="Schneider K."/>
            <person name="Heinemeyer I."/>
            <person name="Morgenstern B."/>
            <person name="Voss B."/>
            <person name="Hess W.R."/>
            <person name="Reva O."/>
            <person name="Junge H."/>
            <person name="Voigt B."/>
            <person name="Jungblut P.R."/>
            <person name="Vater J."/>
            <person name="Suessmuth R."/>
            <person name="Liesegang H."/>
            <person name="Strittmatter A."/>
            <person name="Gottschalk G."/>
            <person name="Borriss R."/>
        </authorList>
    </citation>
    <scope>NUCLEOTIDE SEQUENCE [LARGE SCALE GENOMIC DNA]</scope>
    <source>
        <strain>DSM 23117 / BGSC 10A6 / LMG 26770 / FZB42</strain>
    </source>
</reference>
<evidence type="ECO:0000255" key="1">
    <source>
        <dbReference type="HAMAP-Rule" id="MF_00149"/>
    </source>
</evidence>
<evidence type="ECO:0000256" key="2">
    <source>
        <dbReference type="SAM" id="MobiDB-lite"/>
    </source>
</evidence>
<accession>A7Z4X6</accession>
<keyword id="KW-0227">DNA damage</keyword>
<keyword id="KW-0234">DNA repair</keyword>
<proteinExistence type="inferred from homology"/>
<dbReference type="EMBL" id="CP000560">
    <property type="protein sequence ID" value="ABS74052.1"/>
    <property type="molecule type" value="Genomic_DNA"/>
</dbReference>
<dbReference type="RefSeq" id="WP_012117587.1">
    <property type="nucleotide sequence ID" value="NC_009725.2"/>
</dbReference>
<dbReference type="SMR" id="A7Z4X6"/>
<dbReference type="GeneID" id="93080822"/>
<dbReference type="KEGG" id="bay:RBAM_016890"/>
<dbReference type="HOGENOM" id="CLU_004131_4_1_9"/>
<dbReference type="Proteomes" id="UP000001120">
    <property type="component" value="Chromosome"/>
</dbReference>
<dbReference type="GO" id="GO:0032300">
    <property type="term" value="C:mismatch repair complex"/>
    <property type="evidence" value="ECO:0007669"/>
    <property type="project" value="InterPro"/>
</dbReference>
<dbReference type="GO" id="GO:0005524">
    <property type="term" value="F:ATP binding"/>
    <property type="evidence" value="ECO:0007669"/>
    <property type="project" value="InterPro"/>
</dbReference>
<dbReference type="GO" id="GO:0016887">
    <property type="term" value="F:ATP hydrolysis activity"/>
    <property type="evidence" value="ECO:0007669"/>
    <property type="project" value="InterPro"/>
</dbReference>
<dbReference type="GO" id="GO:0140664">
    <property type="term" value="F:ATP-dependent DNA damage sensor activity"/>
    <property type="evidence" value="ECO:0007669"/>
    <property type="project" value="InterPro"/>
</dbReference>
<dbReference type="GO" id="GO:0030983">
    <property type="term" value="F:mismatched DNA binding"/>
    <property type="evidence" value="ECO:0007669"/>
    <property type="project" value="InterPro"/>
</dbReference>
<dbReference type="GO" id="GO:0006298">
    <property type="term" value="P:mismatch repair"/>
    <property type="evidence" value="ECO:0007669"/>
    <property type="project" value="UniProtKB-UniRule"/>
</dbReference>
<dbReference type="CDD" id="cd16926">
    <property type="entry name" value="HATPase_MutL-MLH-PMS-like"/>
    <property type="match status" value="1"/>
</dbReference>
<dbReference type="CDD" id="cd00782">
    <property type="entry name" value="MutL_Trans"/>
    <property type="match status" value="1"/>
</dbReference>
<dbReference type="FunFam" id="3.30.1370.100:FF:000004">
    <property type="entry name" value="DNA mismatch repair endonuclease MutL"/>
    <property type="match status" value="1"/>
</dbReference>
<dbReference type="FunFam" id="3.30.230.10:FF:000036">
    <property type="entry name" value="DNA mismatch repair endonuclease MutL"/>
    <property type="match status" value="1"/>
</dbReference>
<dbReference type="FunFam" id="3.30.565.10:FF:000003">
    <property type="entry name" value="DNA mismatch repair endonuclease MutL"/>
    <property type="match status" value="1"/>
</dbReference>
<dbReference type="Gene3D" id="3.30.230.10">
    <property type="match status" value="1"/>
</dbReference>
<dbReference type="Gene3D" id="3.30.565.10">
    <property type="entry name" value="Histidine kinase-like ATPase, C-terminal domain"/>
    <property type="match status" value="1"/>
</dbReference>
<dbReference type="Gene3D" id="3.30.1540.20">
    <property type="entry name" value="MutL, C-terminal domain, dimerisation subdomain"/>
    <property type="match status" value="1"/>
</dbReference>
<dbReference type="Gene3D" id="3.30.1370.100">
    <property type="entry name" value="MutL, C-terminal domain, regulatory subdomain"/>
    <property type="match status" value="1"/>
</dbReference>
<dbReference type="HAMAP" id="MF_00149">
    <property type="entry name" value="DNA_mis_repair"/>
    <property type="match status" value="1"/>
</dbReference>
<dbReference type="InterPro" id="IPR014762">
    <property type="entry name" value="DNA_mismatch_repair_CS"/>
</dbReference>
<dbReference type="InterPro" id="IPR020667">
    <property type="entry name" value="DNA_mismatch_repair_MutL"/>
</dbReference>
<dbReference type="InterPro" id="IPR013507">
    <property type="entry name" value="DNA_mismatch_S5_2-like"/>
</dbReference>
<dbReference type="InterPro" id="IPR036890">
    <property type="entry name" value="HATPase_C_sf"/>
</dbReference>
<dbReference type="InterPro" id="IPR002099">
    <property type="entry name" value="MutL/Mlh/PMS"/>
</dbReference>
<dbReference type="InterPro" id="IPR038973">
    <property type="entry name" value="MutL/Mlh/Pms-like"/>
</dbReference>
<dbReference type="InterPro" id="IPR014790">
    <property type="entry name" value="MutL_C"/>
</dbReference>
<dbReference type="InterPro" id="IPR042120">
    <property type="entry name" value="MutL_C_dimsub"/>
</dbReference>
<dbReference type="InterPro" id="IPR042121">
    <property type="entry name" value="MutL_C_regsub"/>
</dbReference>
<dbReference type="InterPro" id="IPR037198">
    <property type="entry name" value="MutL_C_sf"/>
</dbReference>
<dbReference type="InterPro" id="IPR020568">
    <property type="entry name" value="Ribosomal_Su5_D2-typ_SF"/>
</dbReference>
<dbReference type="InterPro" id="IPR014721">
    <property type="entry name" value="Ribsml_uS5_D2-typ_fold_subgr"/>
</dbReference>
<dbReference type="NCBIfam" id="TIGR00585">
    <property type="entry name" value="mutl"/>
    <property type="match status" value="1"/>
</dbReference>
<dbReference type="NCBIfam" id="NF000950">
    <property type="entry name" value="PRK00095.1-3"/>
    <property type="match status" value="1"/>
</dbReference>
<dbReference type="PANTHER" id="PTHR10073">
    <property type="entry name" value="DNA MISMATCH REPAIR PROTEIN MLH, PMS, MUTL"/>
    <property type="match status" value="1"/>
</dbReference>
<dbReference type="PANTHER" id="PTHR10073:SF12">
    <property type="entry name" value="DNA MISMATCH REPAIR PROTEIN MLH1"/>
    <property type="match status" value="1"/>
</dbReference>
<dbReference type="Pfam" id="PF01119">
    <property type="entry name" value="DNA_mis_repair"/>
    <property type="match status" value="1"/>
</dbReference>
<dbReference type="Pfam" id="PF13589">
    <property type="entry name" value="HATPase_c_3"/>
    <property type="match status" value="1"/>
</dbReference>
<dbReference type="Pfam" id="PF08676">
    <property type="entry name" value="MutL_C"/>
    <property type="match status" value="1"/>
</dbReference>
<dbReference type="SMART" id="SM01340">
    <property type="entry name" value="DNA_mis_repair"/>
    <property type="match status" value="1"/>
</dbReference>
<dbReference type="SMART" id="SM00853">
    <property type="entry name" value="MutL_C"/>
    <property type="match status" value="1"/>
</dbReference>
<dbReference type="SUPFAM" id="SSF55874">
    <property type="entry name" value="ATPase domain of HSP90 chaperone/DNA topoisomerase II/histidine kinase"/>
    <property type="match status" value="1"/>
</dbReference>
<dbReference type="SUPFAM" id="SSF118116">
    <property type="entry name" value="DNA mismatch repair protein MutL"/>
    <property type="match status" value="1"/>
</dbReference>
<dbReference type="SUPFAM" id="SSF54211">
    <property type="entry name" value="Ribosomal protein S5 domain 2-like"/>
    <property type="match status" value="1"/>
</dbReference>
<dbReference type="PROSITE" id="PS00058">
    <property type="entry name" value="DNA_MISMATCH_REPAIR_1"/>
    <property type="match status" value="1"/>
</dbReference>
<organism>
    <name type="scientific">Bacillus velezensis (strain DSM 23117 / BGSC 10A6 / LMG 26770 / FZB42)</name>
    <name type="common">Bacillus amyloliquefaciens subsp. plantarum</name>
    <dbReference type="NCBI Taxonomy" id="326423"/>
    <lineage>
        <taxon>Bacteria</taxon>
        <taxon>Bacillati</taxon>
        <taxon>Bacillota</taxon>
        <taxon>Bacilli</taxon>
        <taxon>Bacillales</taxon>
        <taxon>Bacillaceae</taxon>
        <taxon>Bacillus</taxon>
        <taxon>Bacillus amyloliquefaciens group</taxon>
    </lineage>
</organism>
<comment type="function">
    <text evidence="1">This protein is involved in the repair of mismatches in DNA. It is required for dam-dependent methyl-directed DNA mismatch repair. May act as a 'molecular matchmaker', a protein that promotes the formation of a stable complex between two or more DNA-binding proteins in an ATP-dependent manner without itself being part of a final effector complex.</text>
</comment>
<comment type="similarity">
    <text evidence="1">Belongs to the DNA mismatch repair MutL/HexB family.</text>
</comment>
<protein>
    <recommendedName>
        <fullName evidence="1">DNA mismatch repair protein MutL</fullName>
    </recommendedName>
</protein>
<gene>
    <name evidence="1" type="primary">mutL</name>
    <name type="ordered locus">RBAM_016890</name>
</gene>